<feature type="signal peptide" evidence="2">
    <location>
        <begin position="1"/>
        <end position="22"/>
    </location>
</feature>
<feature type="chain" id="PRO_0000024888" description="Pectate lyase">
    <location>
        <begin position="23"/>
        <end position="434"/>
    </location>
</feature>
<feature type="active site" evidence="2">
    <location>
        <position position="312"/>
    </location>
</feature>
<feature type="binding site" evidence="1">
    <location>
        <position position="232"/>
    </location>
    <ligand>
        <name>Ca(2+)</name>
        <dbReference type="ChEBI" id="CHEBI:29108"/>
    </ligand>
</feature>
<feature type="binding site" evidence="1">
    <location>
        <position position="256"/>
    </location>
    <ligand>
        <name>Ca(2+)</name>
        <dbReference type="ChEBI" id="CHEBI:29108"/>
    </ligand>
</feature>
<feature type="binding site" evidence="1">
    <location>
        <position position="260"/>
    </location>
    <ligand>
        <name>Ca(2+)</name>
        <dbReference type="ChEBI" id="CHEBI:29108"/>
    </ligand>
</feature>
<feature type="glycosylation site" description="N-linked (GlcNAc...) asparagine" evidence="2">
    <location>
        <position position="68"/>
    </location>
</feature>
<feature type="glycosylation site" description="N-linked (GlcNAc...) asparagine" evidence="2">
    <location>
        <position position="97"/>
    </location>
</feature>
<organism>
    <name type="scientific">Lilium longiflorum</name>
    <name type="common">Trumpet lily</name>
    <dbReference type="NCBI Taxonomy" id="4690"/>
    <lineage>
        <taxon>Eukaryota</taxon>
        <taxon>Viridiplantae</taxon>
        <taxon>Streptophyta</taxon>
        <taxon>Embryophyta</taxon>
        <taxon>Tracheophyta</taxon>
        <taxon>Spermatophyta</taxon>
        <taxon>Magnoliopsida</taxon>
        <taxon>Liliopsida</taxon>
        <taxon>Liliales</taxon>
        <taxon>Liliaceae</taxon>
        <taxon>Lilium</taxon>
    </lineage>
</organism>
<reference key="1">
    <citation type="submission" date="1993-06" db="EMBL/GenBank/DDBJ databases">
        <authorList>
            <person name="Kim S.R."/>
            <person name="Finkel D.J."/>
            <person name="An G."/>
        </authorList>
    </citation>
    <scope>NUCLEOTIDE SEQUENCE [MRNA]</scope>
    <source>
        <strain>cv. Nellie white</strain>
        <tissue>Pollen</tissue>
    </source>
</reference>
<accession>P40973</accession>
<comment type="catalytic activity">
    <reaction>
        <text>Eliminative cleavage of (1-&gt;4)-alpha-D-galacturonan to give oligosaccharides with 4-deoxy-alpha-D-galact-4-enuronosyl groups at their non-reducing ends.</text>
        <dbReference type="EC" id="4.2.2.2"/>
    </reaction>
</comment>
<comment type="cofactor">
    <cofactor evidence="1">
        <name>Ca(2+)</name>
        <dbReference type="ChEBI" id="CHEBI:29108"/>
    </cofactor>
    <text evidence="1">Binds 1 Ca(2+) ion. Required for its activity.</text>
</comment>
<comment type="pathway">
    <text>Glycan metabolism; pectin degradation; 2-dehydro-3-deoxy-D-gluconate from pectin: step 2/5.</text>
</comment>
<comment type="similarity">
    <text evidence="3">Belongs to the polysaccharide lyase 1 family.</text>
</comment>
<sequence length="434" mass="48457">MKAAQFFLYSLLFFASAALSSANIAEFDEYWQKKSKVAQAKAKKAYTPHPEEVTNHFNKAVHSSFEGNSTRRNLRTNKLGQCLATNPIDRCWRCKKNWSANRKDLVKCVKGFGRKTTGGAAGEIYVVTDPSDDSLTDPKFGTLRWGVIQDRPLWIIFGKSMVIRLKQELIINNDKTIDGRGANVQIAGGAQLTVQFVHNVIIHGIHIHDIKPGEGGLIRDSEKHSGIRTRSDGDGISIIGSSNIWIDHVSLARCSDGLIDVILGSTAITISNCHLTEHDDVMLLGASDTYTQDEIMQVTVAFNHFGRGLVQRMPRCRYGFVHVVNNDYTHWIMYAVGGSQHPTIISQGNRYIAPHIEAAKEVTKRDYAEPAEWSKWTWKSQGDLFVSGAFFVESGGPFENKYSKKDLIKAKPGTFVQRLTRFSGALNCKENMEC</sequence>
<name>PLY_LILLO</name>
<protein>
    <recommendedName>
        <fullName>Pectate lyase</fullName>
        <ecNumber>4.2.2.2</ecNumber>
    </recommendedName>
</protein>
<evidence type="ECO:0000250" key="1"/>
<evidence type="ECO:0000255" key="2"/>
<evidence type="ECO:0000305" key="3"/>
<proteinExistence type="evidence at transcript level"/>
<dbReference type="EC" id="4.2.2.2"/>
<dbReference type="EMBL" id="Z17328">
    <property type="protein sequence ID" value="CAA78976.1"/>
    <property type="molecule type" value="mRNA"/>
</dbReference>
<dbReference type="EMBL" id="L18911">
    <property type="protein sequence ID" value="AAA33398.1"/>
    <property type="molecule type" value="mRNA"/>
</dbReference>
<dbReference type="PIR" id="S29612">
    <property type="entry name" value="S29612"/>
</dbReference>
<dbReference type="SMR" id="P40973"/>
<dbReference type="CAZy" id="PL1">
    <property type="family name" value="Polysaccharide Lyase Family 1"/>
</dbReference>
<dbReference type="UniPathway" id="UPA00545">
    <property type="reaction ID" value="UER00824"/>
</dbReference>
<dbReference type="GO" id="GO:0046872">
    <property type="term" value="F:metal ion binding"/>
    <property type="evidence" value="ECO:0007669"/>
    <property type="project" value="UniProtKB-KW"/>
</dbReference>
<dbReference type="GO" id="GO:0030570">
    <property type="term" value="F:pectate lyase activity"/>
    <property type="evidence" value="ECO:0007669"/>
    <property type="project" value="UniProtKB-EC"/>
</dbReference>
<dbReference type="GO" id="GO:0045490">
    <property type="term" value="P:pectin catabolic process"/>
    <property type="evidence" value="ECO:0007669"/>
    <property type="project" value="UniProtKB-UniPathway"/>
</dbReference>
<dbReference type="Gene3D" id="2.160.20.10">
    <property type="entry name" value="Single-stranded right-handed beta-helix, Pectin lyase-like"/>
    <property type="match status" value="1"/>
</dbReference>
<dbReference type="InterPro" id="IPR018082">
    <property type="entry name" value="AmbAllergen"/>
</dbReference>
<dbReference type="InterPro" id="IPR002022">
    <property type="entry name" value="Pec_lyase"/>
</dbReference>
<dbReference type="InterPro" id="IPR007524">
    <property type="entry name" value="Pec_lyase_N"/>
</dbReference>
<dbReference type="InterPro" id="IPR012334">
    <property type="entry name" value="Pectin_lyas_fold"/>
</dbReference>
<dbReference type="InterPro" id="IPR011050">
    <property type="entry name" value="Pectin_lyase_fold/virulence"/>
</dbReference>
<dbReference type="InterPro" id="IPR045032">
    <property type="entry name" value="PEL"/>
</dbReference>
<dbReference type="PANTHER" id="PTHR31683:SF208">
    <property type="entry name" value="PECTATE LYASE"/>
    <property type="match status" value="1"/>
</dbReference>
<dbReference type="PANTHER" id="PTHR31683">
    <property type="entry name" value="PECTATE LYASE 18-RELATED"/>
    <property type="match status" value="1"/>
</dbReference>
<dbReference type="Pfam" id="PF04431">
    <property type="entry name" value="Pec_lyase_N"/>
    <property type="match status" value="1"/>
</dbReference>
<dbReference type="Pfam" id="PF00544">
    <property type="entry name" value="Pectate_lyase_4"/>
    <property type="match status" value="1"/>
</dbReference>
<dbReference type="PRINTS" id="PR00807">
    <property type="entry name" value="AMBALLERGEN"/>
</dbReference>
<dbReference type="SMART" id="SM00656">
    <property type="entry name" value="Amb_all"/>
    <property type="match status" value="1"/>
</dbReference>
<dbReference type="SUPFAM" id="SSF51126">
    <property type="entry name" value="Pectin lyase-like"/>
    <property type="match status" value="1"/>
</dbReference>
<keyword id="KW-0106">Calcium</keyword>
<keyword id="KW-0325">Glycoprotein</keyword>
<keyword id="KW-0456">Lyase</keyword>
<keyword id="KW-0479">Metal-binding</keyword>
<keyword id="KW-0732">Signal</keyword>